<keyword id="KW-0687">Ribonucleoprotein</keyword>
<keyword id="KW-0689">Ribosomal protein</keyword>
<keyword id="KW-0694">RNA-binding</keyword>
<keyword id="KW-0699">rRNA-binding</keyword>
<reference key="1">
    <citation type="journal article" date="2011" name="J. Bacteriol.">
        <title>Complete genome sequence of the plant growth-promoting endophyte Burkholderia phytofirmans strain PsJN.</title>
        <authorList>
            <person name="Weilharter A."/>
            <person name="Mitter B."/>
            <person name="Shin M.V."/>
            <person name="Chain P.S."/>
            <person name="Nowak J."/>
            <person name="Sessitsch A."/>
        </authorList>
    </citation>
    <scope>NUCLEOTIDE SEQUENCE [LARGE SCALE GENOMIC DNA]</scope>
    <source>
        <strain>DSM 17436 / LMG 22146 / PsJN</strain>
    </source>
</reference>
<comment type="function">
    <text evidence="1">One of the early assembly proteins it binds 23S rRNA. One of the proteins that surrounds the polypeptide exit tunnel on the outside of the ribosome. Forms the main docking site for trigger factor binding to the ribosome.</text>
</comment>
<comment type="subunit">
    <text evidence="1">Part of the 50S ribosomal subunit. Contacts protein L29, and trigger factor when it is bound to the ribosome.</text>
</comment>
<comment type="similarity">
    <text evidence="1">Belongs to the universal ribosomal protein uL23 family.</text>
</comment>
<gene>
    <name evidence="1" type="primary">rplW</name>
    <name type="ordered locus">Bphyt_3642</name>
</gene>
<accession>B2T749</accession>
<feature type="chain" id="PRO_1000144543" description="Large ribosomal subunit protein uL23">
    <location>
        <begin position="1"/>
        <end position="104"/>
    </location>
</feature>
<protein>
    <recommendedName>
        <fullName evidence="1">Large ribosomal subunit protein uL23</fullName>
    </recommendedName>
    <alternativeName>
        <fullName evidence="2">50S ribosomal protein L23</fullName>
    </alternativeName>
</protein>
<evidence type="ECO:0000255" key="1">
    <source>
        <dbReference type="HAMAP-Rule" id="MF_01369"/>
    </source>
</evidence>
<evidence type="ECO:0000305" key="2"/>
<organism>
    <name type="scientific">Paraburkholderia phytofirmans (strain DSM 17436 / LMG 22146 / PsJN)</name>
    <name type="common">Burkholderia phytofirmans</name>
    <dbReference type="NCBI Taxonomy" id="398527"/>
    <lineage>
        <taxon>Bacteria</taxon>
        <taxon>Pseudomonadati</taxon>
        <taxon>Pseudomonadota</taxon>
        <taxon>Betaproteobacteria</taxon>
        <taxon>Burkholderiales</taxon>
        <taxon>Burkholderiaceae</taxon>
        <taxon>Paraburkholderia</taxon>
    </lineage>
</organism>
<name>RL23_PARPJ</name>
<sequence>MSEIRKNDHRLMQVLLAPVISEKATLVADKNEQVVFEVAPDATKQEVKAAVELLFKVEVNSVNVLVSKGKAKRFGRFMGKRKDVKKAYVCLKPGQEINFEAEAK</sequence>
<dbReference type="EMBL" id="CP001052">
    <property type="protein sequence ID" value="ACD18032.1"/>
    <property type="molecule type" value="Genomic_DNA"/>
</dbReference>
<dbReference type="RefSeq" id="WP_007180135.1">
    <property type="nucleotide sequence ID" value="NC_010681.1"/>
</dbReference>
<dbReference type="SMR" id="B2T749"/>
<dbReference type="STRING" id="398527.Bphyt_3642"/>
<dbReference type="GeneID" id="97310994"/>
<dbReference type="KEGG" id="bpy:Bphyt_3642"/>
<dbReference type="eggNOG" id="COG0089">
    <property type="taxonomic scope" value="Bacteria"/>
</dbReference>
<dbReference type="HOGENOM" id="CLU_037562_3_1_4"/>
<dbReference type="OrthoDB" id="9793353at2"/>
<dbReference type="Proteomes" id="UP000001739">
    <property type="component" value="Chromosome 1"/>
</dbReference>
<dbReference type="GO" id="GO:1990904">
    <property type="term" value="C:ribonucleoprotein complex"/>
    <property type="evidence" value="ECO:0007669"/>
    <property type="project" value="UniProtKB-KW"/>
</dbReference>
<dbReference type="GO" id="GO:0005840">
    <property type="term" value="C:ribosome"/>
    <property type="evidence" value="ECO:0007669"/>
    <property type="project" value="UniProtKB-KW"/>
</dbReference>
<dbReference type="GO" id="GO:0019843">
    <property type="term" value="F:rRNA binding"/>
    <property type="evidence" value="ECO:0007669"/>
    <property type="project" value="UniProtKB-UniRule"/>
</dbReference>
<dbReference type="GO" id="GO:0003735">
    <property type="term" value="F:structural constituent of ribosome"/>
    <property type="evidence" value="ECO:0007669"/>
    <property type="project" value="InterPro"/>
</dbReference>
<dbReference type="GO" id="GO:0006412">
    <property type="term" value="P:translation"/>
    <property type="evidence" value="ECO:0007669"/>
    <property type="project" value="UniProtKB-UniRule"/>
</dbReference>
<dbReference type="FunFam" id="3.30.70.330:FF:000001">
    <property type="entry name" value="50S ribosomal protein L23"/>
    <property type="match status" value="1"/>
</dbReference>
<dbReference type="Gene3D" id="3.30.70.330">
    <property type="match status" value="1"/>
</dbReference>
<dbReference type="HAMAP" id="MF_01369_B">
    <property type="entry name" value="Ribosomal_uL23_B"/>
    <property type="match status" value="1"/>
</dbReference>
<dbReference type="InterPro" id="IPR012677">
    <property type="entry name" value="Nucleotide-bd_a/b_plait_sf"/>
</dbReference>
<dbReference type="InterPro" id="IPR013025">
    <property type="entry name" value="Ribosomal_uL23-like"/>
</dbReference>
<dbReference type="InterPro" id="IPR012678">
    <property type="entry name" value="Ribosomal_uL23/eL15/eS24_sf"/>
</dbReference>
<dbReference type="NCBIfam" id="NF004359">
    <property type="entry name" value="PRK05738.1-3"/>
    <property type="match status" value="1"/>
</dbReference>
<dbReference type="NCBIfam" id="NF004363">
    <property type="entry name" value="PRK05738.2-4"/>
    <property type="match status" value="1"/>
</dbReference>
<dbReference type="PANTHER" id="PTHR11620">
    <property type="entry name" value="60S RIBOSOMAL PROTEIN L23A"/>
    <property type="match status" value="1"/>
</dbReference>
<dbReference type="Pfam" id="PF00276">
    <property type="entry name" value="Ribosomal_L23"/>
    <property type="match status" value="1"/>
</dbReference>
<dbReference type="SUPFAM" id="SSF54189">
    <property type="entry name" value="Ribosomal proteins S24e, L23 and L15e"/>
    <property type="match status" value="1"/>
</dbReference>
<proteinExistence type="inferred from homology"/>